<evidence type="ECO:0000250" key="1"/>
<evidence type="ECO:0000255" key="2"/>
<evidence type="ECO:0000256" key="3">
    <source>
        <dbReference type="SAM" id="MobiDB-lite"/>
    </source>
</evidence>
<evidence type="ECO:0000269" key="4">
    <source>
    </source>
</evidence>
<evidence type="ECO:0000269" key="5">
    <source>
    </source>
</evidence>
<evidence type="ECO:0000305" key="6"/>
<dbReference type="EMBL" id="U02997">
    <property type="protein sequence ID" value="AAB60676.1"/>
    <property type="molecule type" value="Genomic_DNA"/>
</dbReference>
<dbReference type="EMBL" id="U02996">
    <property type="protein sequence ID" value="AAB60676.1"/>
    <property type="status" value="JOINED"/>
    <property type="molecule type" value="Genomic_DNA"/>
</dbReference>
<dbReference type="EMBL" id="U03028">
    <property type="protein sequence ID" value="AAA57170.1"/>
    <property type="molecule type" value="mRNA"/>
</dbReference>
<dbReference type="EMBL" id="U05705">
    <property type="protein sequence ID" value="AAB60468.1"/>
    <property type="molecule type" value="Genomic_DNA"/>
</dbReference>
<dbReference type="PIR" id="I48226">
    <property type="entry name" value="I48226"/>
</dbReference>
<dbReference type="PIR" id="I49413">
    <property type="entry name" value="I49413"/>
</dbReference>
<dbReference type="SMR" id="P28309"/>
<dbReference type="FunCoup" id="P28309">
    <property type="interactions" value="42"/>
</dbReference>
<dbReference type="iPTMnet" id="P28309"/>
<dbReference type="PhosphoSitePlus" id="P28309"/>
<dbReference type="PeptideAtlas" id="P28309"/>
<dbReference type="AGR" id="MGI:94882"/>
<dbReference type="MGI" id="MGI:94882">
    <property type="gene designation" value="Defa2"/>
</dbReference>
<dbReference type="InParanoid" id="P28309"/>
<dbReference type="PhylomeDB" id="P28309"/>
<dbReference type="Reactome" id="R-MMU-1461973">
    <property type="pathway name" value="Defensins"/>
</dbReference>
<dbReference type="Reactome" id="R-MMU-1462054">
    <property type="pathway name" value="Alpha-defensins"/>
</dbReference>
<dbReference type="Reactome" id="R-MMU-6798695">
    <property type="pathway name" value="Neutrophil degranulation"/>
</dbReference>
<dbReference type="PRO" id="PR:P28309"/>
<dbReference type="Proteomes" id="UP000000589">
    <property type="component" value="Unplaced"/>
</dbReference>
<dbReference type="RNAct" id="P28309">
    <property type="molecule type" value="protein"/>
</dbReference>
<dbReference type="GO" id="GO:0005615">
    <property type="term" value="C:extracellular space"/>
    <property type="evidence" value="ECO:0000314"/>
    <property type="project" value="MGI"/>
</dbReference>
<dbReference type="GO" id="GO:0071222">
    <property type="term" value="P:cellular response to lipopolysaccharide"/>
    <property type="evidence" value="ECO:0000316"/>
    <property type="project" value="MGI"/>
</dbReference>
<dbReference type="GO" id="GO:0042742">
    <property type="term" value="P:defense response to bacterium"/>
    <property type="evidence" value="ECO:0000314"/>
    <property type="project" value="MGI"/>
</dbReference>
<dbReference type="GO" id="GO:0050829">
    <property type="term" value="P:defense response to Gram-negative bacterium"/>
    <property type="evidence" value="ECO:0000316"/>
    <property type="project" value="MGI"/>
</dbReference>
<dbReference type="GO" id="GO:0050830">
    <property type="term" value="P:defense response to Gram-positive bacterium"/>
    <property type="evidence" value="ECO:0000316"/>
    <property type="project" value="MGI"/>
</dbReference>
<dbReference type="GO" id="GO:0009410">
    <property type="term" value="P:response to xenobiotic stimulus"/>
    <property type="evidence" value="ECO:0000314"/>
    <property type="project" value="MGI"/>
</dbReference>
<dbReference type="InterPro" id="IPR016327">
    <property type="entry name" value="Alpha-defensin"/>
</dbReference>
<dbReference type="InterPro" id="IPR006081">
    <property type="entry name" value="Alpha-defensin_C"/>
</dbReference>
<dbReference type="InterPro" id="IPR002366">
    <property type="entry name" value="Alpha-defensin_N"/>
</dbReference>
<dbReference type="InterPro" id="IPR006080">
    <property type="entry name" value="Beta/alpha-defensin_C"/>
</dbReference>
<dbReference type="PANTHER" id="PTHR11876">
    <property type="entry name" value="ALPHA-DEFENSIN 1"/>
    <property type="match status" value="1"/>
</dbReference>
<dbReference type="PANTHER" id="PTHR11876:SF2">
    <property type="entry name" value="ALPHA-DEFENSIN 1-RELATED"/>
    <property type="match status" value="1"/>
</dbReference>
<dbReference type="Pfam" id="PF00323">
    <property type="entry name" value="Defensin_1"/>
    <property type="match status" value="1"/>
</dbReference>
<dbReference type="Pfam" id="PF00879">
    <property type="entry name" value="Defensin_propep"/>
    <property type="match status" value="1"/>
</dbReference>
<dbReference type="PIRSF" id="PIRSF001875">
    <property type="entry name" value="Alpha-defensin"/>
    <property type="match status" value="1"/>
</dbReference>
<dbReference type="SMART" id="SM01418">
    <property type="entry name" value="Defensin_propep"/>
    <property type="match status" value="1"/>
</dbReference>
<dbReference type="SMART" id="SM00048">
    <property type="entry name" value="DEFSN"/>
    <property type="match status" value="1"/>
</dbReference>
<dbReference type="SUPFAM" id="SSF57392">
    <property type="entry name" value="Defensin-like"/>
    <property type="match status" value="1"/>
</dbReference>
<dbReference type="PROSITE" id="PS00269">
    <property type="entry name" value="DEFENSIN"/>
    <property type="match status" value="1"/>
</dbReference>
<organism>
    <name type="scientific">Mus musculus</name>
    <name type="common">Mouse</name>
    <dbReference type="NCBI Taxonomy" id="10090"/>
    <lineage>
        <taxon>Eukaryota</taxon>
        <taxon>Metazoa</taxon>
        <taxon>Chordata</taxon>
        <taxon>Craniata</taxon>
        <taxon>Vertebrata</taxon>
        <taxon>Euteleostomi</taxon>
        <taxon>Mammalia</taxon>
        <taxon>Eutheria</taxon>
        <taxon>Euarchontoglires</taxon>
        <taxon>Glires</taxon>
        <taxon>Rodentia</taxon>
        <taxon>Myomorpha</taxon>
        <taxon>Muroidea</taxon>
        <taxon>Muridae</taxon>
        <taxon>Murinae</taxon>
        <taxon>Mus</taxon>
        <taxon>Mus</taxon>
    </lineage>
</organism>
<gene>
    <name type="primary">Defa2</name>
    <name type="synonym">Defcr2</name>
</gene>
<accession>P28309</accession>
<accession>P82293</accession>
<accession>Q60616</accession>
<accession>Q62537</accession>
<name>DEFA2_MOUSE</name>
<feature type="signal peptide" evidence="2">
    <location>
        <begin position="1"/>
        <end position="19"/>
    </location>
</feature>
<feature type="propeptide" id="PRO_0000006819" evidence="4 5">
    <location>
        <begin position="20"/>
        <end position="58"/>
    </location>
</feature>
<feature type="peptide" id="PRO_0000006820" description="Alpha-defensin 2">
    <location>
        <begin position="59"/>
        <end position="93"/>
    </location>
</feature>
<feature type="region of interest" description="Disordered" evidence="3">
    <location>
        <begin position="23"/>
        <end position="49"/>
    </location>
</feature>
<feature type="disulfide bond" evidence="1">
    <location>
        <begin position="64"/>
        <end position="92"/>
    </location>
</feature>
<feature type="disulfide bond" evidence="1">
    <location>
        <begin position="66"/>
        <end position="81"/>
    </location>
</feature>
<feature type="disulfide bond" evidence="1">
    <location>
        <begin position="71"/>
        <end position="91"/>
    </location>
</feature>
<feature type="sequence conflict" description="In Ref. 4; AAB60468." evidence="6" ref="4">
    <original>M</original>
    <variation>L</variation>
    <location>
        <position position="87"/>
    </location>
</feature>
<protein>
    <recommendedName>
        <fullName>Alpha-defensin 2</fullName>
    </recommendedName>
    <alternativeName>
        <fullName>Cryptdin-1</fullName>
    </alternativeName>
    <alternativeName>
        <fullName>Defensin-related cryptdin-2</fullName>
    </alternativeName>
</protein>
<comment type="function">
    <text evidence="4">Has broad-spectrum antimicrobial properties. Has antibacterial activity against the Gram-positive bacterium L.monocytogenes EGD and the Gram-negative bacteria E.coli ML-35p and avirulent S.typhimurium 7953, but not against the mouse-virulent S.typhimurium 14028S. Probably contributes to the antimicrobial barrier function of the small bowel mucosa.</text>
</comment>
<comment type="subcellular location">
    <subcellularLocation>
        <location>Secreted</location>
    </subcellularLocation>
</comment>
<comment type="tissue specificity">
    <text>Paneth cells of the small bowel.</text>
</comment>
<comment type="similarity">
    <text evidence="6">Belongs to the alpha-defensin family.</text>
</comment>
<sequence>MKPLVLLSALVLLSFQVQADPIQNTDEETKTEEQSGEEDQAVSVSFGDREGASLQEESLRDLVCYCRTRGCKRRERMNGTCRKGHLMYTLCCR</sequence>
<proteinExistence type="evidence at protein level"/>
<keyword id="KW-0044">Antibiotic</keyword>
<keyword id="KW-0929">Antimicrobial</keyword>
<keyword id="KW-0211">Defensin</keyword>
<keyword id="KW-0903">Direct protein sequencing</keyword>
<keyword id="KW-1015">Disulfide bond</keyword>
<keyword id="KW-1185">Reference proteome</keyword>
<keyword id="KW-0964">Secreted</keyword>
<keyword id="KW-0732">Signal</keyword>
<reference key="1">
    <citation type="journal article" date="1994" name="Genomics">
        <title>Structure and diversity of the murine cryptdin gene family.</title>
        <authorList>
            <person name="Huttner K.M."/>
            <person name="Selsted M.E."/>
            <person name="Ouellette A.J."/>
        </authorList>
    </citation>
    <scope>NUCLEOTIDE SEQUENCE [GENOMIC DNA]</scope>
    <source>
        <strain>129</strain>
        <tissue>Small intestine</tissue>
    </source>
</reference>
<reference key="2">
    <citation type="journal article" date="1992" name="J. Cell Biol.">
        <title>Enteric defensins: antibiotic peptide components of intestinal host defense.</title>
        <authorList>
            <person name="Selsted M.E."/>
            <person name="Miller S.I."/>
            <person name="Henschen A.H."/>
            <person name="Ouellette A.J."/>
        </authorList>
    </citation>
    <scope>PROTEIN SEQUENCE OF 59-93</scope>
    <source>
        <strain>SWR/J</strain>
        <tissue>Small intestine</tissue>
    </source>
</reference>
<reference key="3">
    <citation type="journal article" date="1992" name="Infect. Immun.">
        <title>Cryptdins: antimicrobial defensins of the murine small intestine.</title>
        <authorList>
            <person name="Eisenhauer P.B."/>
            <person name="Harwig S.S.S.L."/>
            <person name="Lehrer R.I."/>
        </authorList>
    </citation>
    <scope>PROTEIN SEQUENCE OF 59-93</scope>
    <scope>FUNCTION</scope>
    <source>
        <strain>Swiss Webster</strain>
        <tissue>Small intestine</tissue>
    </source>
</reference>
<reference key="4">
    <citation type="journal article" date="1994" name="Mamm. Genome">
        <title>Genetic mapping of 40 cDNA clones on the mouse genome by PCR.</title>
        <authorList>
            <person name="Ko M.S."/>
            <person name="Wang X."/>
            <person name="Horton J.H."/>
            <person name="Hagen M.D."/>
            <person name="Takahashi N."/>
            <person name="Maezaki Y."/>
            <person name="Nadeau J.H."/>
        </authorList>
    </citation>
    <scope>NUCLEOTIDE SEQUENCE [GENOMIC DNA] OF 71-93</scope>
    <source>
        <strain>C57BL/6J</strain>
    </source>
</reference>